<evidence type="ECO:0000250" key="1"/>
<evidence type="ECO:0000250" key="2">
    <source>
        <dbReference type="UniProtKB" id="Q6WVG3"/>
    </source>
</evidence>
<evidence type="ECO:0000256" key="3">
    <source>
        <dbReference type="SAM" id="MobiDB-lite"/>
    </source>
</evidence>
<evidence type="ECO:0000269" key="4">
    <source>
    </source>
</evidence>
<evidence type="ECO:0000269" key="5">
    <source>
    </source>
</evidence>
<evidence type="ECO:0007744" key="6">
    <source>
    </source>
</evidence>
<evidence type="ECO:0007744" key="7">
    <source>
    </source>
</evidence>
<evidence type="ECO:0007744" key="8">
    <source>
    </source>
</evidence>
<evidence type="ECO:0007829" key="9">
    <source>
        <dbReference type="PDB" id="6QZL"/>
    </source>
</evidence>
<sequence>MALADSTRGLPNGGGGGGGSGSSSSSAEPPLFPDIVELNVGGQVYVTRRCTVVSVPDSLLWRMFTQQQPQELARDSKGRFFLDRDGFLFRYILDYLRDLQLVLPDYFPERSRLQREAEYFELPELVRRLGAPQQPGPGPPPSRRGVHKEGSLGDELLPLGYSEPEQQEGASAGAPSPTLELASRSPSGGAAGPLLTPSQSLDGSRRSGYITIGYRGSYTIGRDAQADAKFRRVARITVCGKTSLAKEVFGDTLNESRDPDRPPERYTSRYYLKFNFLEQAFDKLSESGFHMVACSSTGTCAFASSTDQSEDKIWTSYTEYVFCRE</sequence>
<organism>
    <name type="scientific">Homo sapiens</name>
    <name type="common">Human</name>
    <dbReference type="NCBI Taxonomy" id="9606"/>
    <lineage>
        <taxon>Eukaryota</taxon>
        <taxon>Metazoa</taxon>
        <taxon>Chordata</taxon>
        <taxon>Craniata</taxon>
        <taxon>Vertebrata</taxon>
        <taxon>Euteleostomi</taxon>
        <taxon>Mammalia</taxon>
        <taxon>Eutheria</taxon>
        <taxon>Euarchontoglires</taxon>
        <taxon>Primates</taxon>
        <taxon>Haplorrhini</taxon>
        <taxon>Catarrhini</taxon>
        <taxon>Hominidae</taxon>
        <taxon>Homo</taxon>
    </lineage>
</organism>
<reference key="1">
    <citation type="journal article" date="2004" name="J. Assoc. Res. Otolaryngol.">
        <title>Isolation from cochlea of a novel human intronless gene with predominant fetal expression.</title>
        <authorList>
            <person name="Resendes B.L."/>
            <person name="Kuo S.F."/>
            <person name="Robertson N.G."/>
            <person name="Giersch A.B."/>
            <person name="Honrubia D."/>
            <person name="Ohara O."/>
            <person name="Adams J.C."/>
            <person name="Morton C.C."/>
        </authorList>
    </citation>
    <scope>NUCLEOTIDE SEQUENCE [MRNA]</scope>
    <scope>TISSUE SPECIFICITY</scope>
    <source>
        <tissue>Cochlea</tissue>
    </source>
</reference>
<reference key="2">
    <citation type="journal article" date="2004" name="Genome Res.">
        <title>The status, quality, and expansion of the NIH full-length cDNA project: the Mammalian Gene Collection (MGC).</title>
        <authorList>
            <consortium name="The MGC Project Team"/>
        </authorList>
    </citation>
    <scope>NUCLEOTIDE SEQUENCE [LARGE SCALE MRNA]</scope>
    <source>
        <tissue>Testis</tissue>
    </source>
</reference>
<reference key="3">
    <citation type="journal article" date="2007" name="Science">
        <title>ATM and ATR substrate analysis reveals extensive protein networks responsive to DNA damage.</title>
        <authorList>
            <person name="Matsuoka S."/>
            <person name="Ballif B.A."/>
            <person name="Smogorzewska A."/>
            <person name="McDonald E.R. III"/>
            <person name="Hurov K.E."/>
            <person name="Luo J."/>
            <person name="Bakalarski C.E."/>
            <person name="Zhao Z."/>
            <person name="Solimini N."/>
            <person name="Lerenthal Y."/>
            <person name="Shiloh Y."/>
            <person name="Gygi S.P."/>
            <person name="Elledge S.J."/>
        </authorList>
    </citation>
    <scope>IDENTIFICATION BY MASS SPECTROMETRY [LARGE SCALE ANALYSIS]</scope>
    <source>
        <tissue>Embryonic kidney</tissue>
    </source>
</reference>
<reference key="4">
    <citation type="journal article" date="2008" name="Proc. Natl. Acad. Sci. U.S.A.">
        <title>A quantitative atlas of mitotic phosphorylation.</title>
        <authorList>
            <person name="Dephoure N."/>
            <person name="Zhou C."/>
            <person name="Villen J."/>
            <person name="Beausoleil S.A."/>
            <person name="Bakalarski C.E."/>
            <person name="Elledge S.J."/>
            <person name="Gygi S.P."/>
        </authorList>
    </citation>
    <scope>PHOSPHORYLATION [LARGE SCALE ANALYSIS] AT SER-185</scope>
    <scope>IDENTIFICATION BY MASS SPECTROMETRY [LARGE SCALE ANALYSIS]</scope>
    <source>
        <tissue>Cervix carcinoma</tissue>
    </source>
</reference>
<reference key="5">
    <citation type="journal article" date="2009" name="Anal. Chem.">
        <title>Lys-N and trypsin cover complementary parts of the phosphoproteome in a refined SCX-based approach.</title>
        <authorList>
            <person name="Gauci S."/>
            <person name="Helbig A.O."/>
            <person name="Slijper M."/>
            <person name="Krijgsveld J."/>
            <person name="Heck A.J."/>
            <person name="Mohammed S."/>
        </authorList>
    </citation>
    <scope>IDENTIFICATION BY MASS SPECTROMETRY [LARGE SCALE ANALYSIS]</scope>
</reference>
<reference key="6">
    <citation type="journal article" date="2009" name="Sci. Signal.">
        <title>Quantitative phosphoproteomic analysis of T cell receptor signaling reveals system-wide modulation of protein-protein interactions.</title>
        <authorList>
            <person name="Mayya V."/>
            <person name="Lundgren D.H."/>
            <person name="Hwang S.-I."/>
            <person name="Rezaul K."/>
            <person name="Wu L."/>
            <person name="Eng J.K."/>
            <person name="Rodionov V."/>
            <person name="Han D.K."/>
        </authorList>
    </citation>
    <scope>IDENTIFICATION BY MASS SPECTROMETRY [LARGE SCALE ANALYSIS]</scope>
    <source>
        <tissue>Leukemic T-cell</tissue>
    </source>
</reference>
<reference key="7">
    <citation type="journal article" date="2010" name="Nature">
        <title>Native GABA(B) receptors are heteromultimers with a family of auxiliary subunits.</title>
        <authorList>
            <person name="Schwenk J."/>
            <person name="Metz M."/>
            <person name="Zolles G."/>
            <person name="Turecek R."/>
            <person name="Fritzius T."/>
            <person name="Bildl W."/>
            <person name="Tarusawa E."/>
            <person name="Kulik A."/>
            <person name="Unger A."/>
            <person name="Ivankova K."/>
            <person name="Seddik R."/>
            <person name="Tiao J.Y."/>
            <person name="Rajalu M."/>
            <person name="Trojanova J."/>
            <person name="Rohde V."/>
            <person name="Gassmann M."/>
            <person name="Schulte U."/>
            <person name="Fakler B."/>
            <person name="Bettler B."/>
        </authorList>
    </citation>
    <scope>INTERACTION WITH GABBR1 AND GABBR2</scope>
    <scope>TETRAMERIZATION</scope>
</reference>
<reference key="8">
    <citation type="journal article" date="2010" name="Sci. Signal.">
        <title>Quantitative phosphoproteomics reveals widespread full phosphorylation site occupancy during mitosis.</title>
        <authorList>
            <person name="Olsen J.V."/>
            <person name="Vermeulen M."/>
            <person name="Santamaria A."/>
            <person name="Kumar C."/>
            <person name="Miller M.L."/>
            <person name="Jensen L.J."/>
            <person name="Gnad F."/>
            <person name="Cox J."/>
            <person name="Jensen T.S."/>
            <person name="Nigg E.A."/>
            <person name="Brunak S."/>
            <person name="Mann M."/>
        </authorList>
    </citation>
    <scope>IDENTIFICATION BY MASS SPECTROMETRY [LARGE SCALE ANALYSIS]</scope>
    <source>
        <tissue>Cervix carcinoma</tissue>
    </source>
</reference>
<reference key="9">
    <citation type="journal article" date="2011" name="BMC Syst. Biol.">
        <title>Initial characterization of the human central proteome.</title>
        <authorList>
            <person name="Burkard T.R."/>
            <person name="Planyavsky M."/>
            <person name="Kaupe I."/>
            <person name="Breitwieser F.P."/>
            <person name="Buerckstuemmer T."/>
            <person name="Bennett K.L."/>
            <person name="Superti-Furga G."/>
            <person name="Colinge J."/>
        </authorList>
    </citation>
    <scope>IDENTIFICATION BY MASS SPECTROMETRY [LARGE SCALE ANALYSIS]</scope>
</reference>
<reference key="10">
    <citation type="journal article" date="2011" name="Sci. Signal.">
        <title>System-wide temporal characterization of the proteome and phosphoproteome of human embryonic stem cell differentiation.</title>
        <authorList>
            <person name="Rigbolt K.T."/>
            <person name="Prokhorova T.A."/>
            <person name="Akimov V."/>
            <person name="Henningsen J."/>
            <person name="Johansen P.T."/>
            <person name="Kratchmarova I."/>
            <person name="Kassem M."/>
            <person name="Mann M."/>
            <person name="Olsen J.V."/>
            <person name="Blagoev B."/>
        </authorList>
    </citation>
    <scope>IDENTIFICATION BY MASS SPECTROMETRY [LARGE SCALE ANALYSIS]</scope>
</reference>
<reference key="11">
    <citation type="journal article" date="2012" name="Proc. Natl. Acad. Sci. U.S.A.">
        <title>N-terminal acetylome analyses and functional insights of the N-terminal acetyltransferase NatB.</title>
        <authorList>
            <person name="Van Damme P."/>
            <person name="Lasa M."/>
            <person name="Polevoda B."/>
            <person name="Gazquez C."/>
            <person name="Elosegui-Artola A."/>
            <person name="Kim D.S."/>
            <person name="De Juan-Pardo E."/>
            <person name="Demeyer K."/>
            <person name="Hole K."/>
            <person name="Larrea E."/>
            <person name="Timmerman E."/>
            <person name="Prieto J."/>
            <person name="Arnesen T."/>
            <person name="Sherman F."/>
            <person name="Gevaert K."/>
            <person name="Aldabe R."/>
        </authorList>
    </citation>
    <scope>ACETYLATION [LARGE SCALE ANALYSIS] AT ALA-2</scope>
    <scope>CLEAVAGE OF INITIATOR METHIONINE [LARGE SCALE ANALYSIS]</scope>
    <scope>IDENTIFICATION BY MASS SPECTROMETRY [LARGE SCALE ANALYSIS]</scope>
</reference>
<reference key="12">
    <citation type="journal article" date="2014" name="J. Proteomics">
        <title>An enzyme assisted RP-RPLC approach for in-depth analysis of human liver phosphoproteome.</title>
        <authorList>
            <person name="Bian Y."/>
            <person name="Song C."/>
            <person name="Cheng K."/>
            <person name="Dong M."/>
            <person name="Wang F."/>
            <person name="Huang J."/>
            <person name="Sun D."/>
            <person name="Wang L."/>
            <person name="Ye M."/>
            <person name="Zou H."/>
        </authorList>
    </citation>
    <scope>PHOSPHORYLATION [LARGE SCALE ANALYSIS] AT SER-151</scope>
    <scope>IDENTIFICATION BY MASS SPECTROMETRY [LARGE SCALE ANALYSIS]</scope>
    <source>
        <tissue>Liver</tissue>
    </source>
</reference>
<comment type="function">
    <text evidence="1">Auxiliary subunit of GABA-B receptors that determine the pharmacology and kinetics of the receptor response. Increases agonist potency and markedly alter the G-protein signaling of the receptors by accelerating onset and promoting desensitization (By similarity).</text>
</comment>
<comment type="subunit">
    <text evidence="5">Interacts as a tetramer with GABBR1 and GABBR2.</text>
</comment>
<comment type="interaction">
    <interactant intactId="EBI-358358">
        <id>Q96CX2</id>
    </interactant>
    <interactant intactId="EBI-358358">
        <id>Q96CX2</id>
        <label>KCTD12</label>
    </interactant>
    <organismsDiffer>false</organismsDiffer>
    <experiments>2</experiments>
</comment>
<comment type="interaction">
    <interactant intactId="EBI-358358">
        <id>Q96CX2</id>
    </interactant>
    <interactant intactId="EBI-10240849">
        <id>Q3KQV3</id>
        <label>ZNF792</label>
    </interactant>
    <organismsDiffer>false</organismsDiffer>
    <experiments>3</experiments>
</comment>
<comment type="subcellular location">
    <subcellularLocation>
        <location>Presynaptic cell membrane</location>
    </subcellularLocation>
    <subcellularLocation>
        <location evidence="1">Postsynaptic cell membrane</location>
    </subcellularLocation>
</comment>
<comment type="tissue specificity">
    <text evidence="4">Present in a variety of fetal organs, with highest expression levels in the cochlea and brain and, in stark contrast, is detected only at extremely low levels in adult organs, such as brain and lung.</text>
</comment>
<keyword id="KW-0002">3D-structure</keyword>
<keyword id="KW-0007">Acetylation</keyword>
<keyword id="KW-1003">Cell membrane</keyword>
<keyword id="KW-0966">Cell projection</keyword>
<keyword id="KW-0472">Membrane</keyword>
<keyword id="KW-0597">Phosphoprotein</keyword>
<keyword id="KW-0628">Postsynaptic cell membrane</keyword>
<keyword id="KW-1267">Proteomics identification</keyword>
<keyword id="KW-1185">Reference proteome</keyword>
<keyword id="KW-0770">Synapse</keyword>
<protein>
    <recommendedName>
        <fullName>BTB/POZ domain-containing protein KCTD12</fullName>
    </recommendedName>
    <alternativeName>
        <fullName>Pfetin</fullName>
    </alternativeName>
    <alternativeName>
        <fullName>Predominantly fetal expressed T1 domain</fullName>
    </alternativeName>
</protein>
<gene>
    <name type="primary">KCTD12</name>
    <name type="synonym">C13orf2</name>
    <name type="synonym">KIAA1778</name>
    <name type="synonym">PFET1</name>
</gene>
<dbReference type="EMBL" id="AF359381">
    <property type="protein sequence ID" value="AAQ15187.1"/>
    <property type="molecule type" value="mRNA"/>
</dbReference>
<dbReference type="EMBL" id="BC013764">
    <property type="protein sequence ID" value="AAH13764.1"/>
    <property type="molecule type" value="mRNA"/>
</dbReference>
<dbReference type="CCDS" id="CCDS9455.1"/>
<dbReference type="RefSeq" id="NP_612453.1">
    <property type="nucleotide sequence ID" value="NM_138444.4"/>
</dbReference>
<dbReference type="PDB" id="6M8S">
    <property type="method" value="X-ray"/>
    <property type="resolution" value="3.71 A"/>
    <property type="chains" value="A/B/M/O/P=200-325"/>
</dbReference>
<dbReference type="PDB" id="6QZL">
    <property type="method" value="X-ray"/>
    <property type="resolution" value="1.98 A"/>
    <property type="chains" value="A/B/C/D/E=202-325"/>
</dbReference>
<dbReference type="PDBsum" id="6M8S"/>
<dbReference type="PDBsum" id="6QZL"/>
<dbReference type="SMR" id="Q96CX2"/>
<dbReference type="BioGRID" id="125419">
    <property type="interactions" value="132"/>
</dbReference>
<dbReference type="CORUM" id="Q96CX2"/>
<dbReference type="FunCoup" id="Q96CX2">
    <property type="interactions" value="164"/>
</dbReference>
<dbReference type="IntAct" id="Q96CX2">
    <property type="interactions" value="43"/>
</dbReference>
<dbReference type="MINT" id="Q96CX2"/>
<dbReference type="STRING" id="9606.ENSP00000366694"/>
<dbReference type="BindingDB" id="Q96CX2"/>
<dbReference type="ChEMBL" id="CHEMBL4523424"/>
<dbReference type="GuidetoPHARMACOLOGY" id="1918"/>
<dbReference type="GlyGen" id="Q96CX2">
    <property type="glycosylation" value="2 sites, 1 O-linked glycan (1 site)"/>
</dbReference>
<dbReference type="iPTMnet" id="Q96CX2"/>
<dbReference type="MetOSite" id="Q96CX2"/>
<dbReference type="PhosphoSitePlus" id="Q96CX2"/>
<dbReference type="BioMuta" id="KCTD12"/>
<dbReference type="DMDM" id="50401124"/>
<dbReference type="REPRODUCTION-2DPAGE" id="IPI00060715"/>
<dbReference type="jPOST" id="Q96CX2"/>
<dbReference type="MassIVE" id="Q96CX2"/>
<dbReference type="PaxDb" id="9606-ENSP00000366694"/>
<dbReference type="PeptideAtlas" id="Q96CX2"/>
<dbReference type="ProteomicsDB" id="76237"/>
<dbReference type="Pumba" id="Q96CX2"/>
<dbReference type="Antibodypedia" id="42369">
    <property type="antibodies" value="143 antibodies from 24 providers"/>
</dbReference>
<dbReference type="DNASU" id="115207"/>
<dbReference type="Ensembl" id="ENST00000377474.4">
    <property type="protein sequence ID" value="ENSP00000366694.2"/>
    <property type="gene ID" value="ENSG00000178695.6"/>
</dbReference>
<dbReference type="GeneID" id="115207"/>
<dbReference type="KEGG" id="hsa:115207"/>
<dbReference type="MANE-Select" id="ENST00000377474.4">
    <property type="protein sequence ID" value="ENSP00000366694.2"/>
    <property type="RefSeq nucleotide sequence ID" value="NM_138444.4"/>
    <property type="RefSeq protein sequence ID" value="NP_612453.1"/>
</dbReference>
<dbReference type="UCSC" id="uc010aeu.2">
    <property type="organism name" value="human"/>
</dbReference>
<dbReference type="AGR" id="HGNC:14678"/>
<dbReference type="CTD" id="115207"/>
<dbReference type="DisGeNET" id="115207"/>
<dbReference type="GeneCards" id="KCTD12"/>
<dbReference type="HGNC" id="HGNC:14678">
    <property type="gene designation" value="KCTD12"/>
</dbReference>
<dbReference type="HPA" id="ENSG00000178695">
    <property type="expression patterns" value="Low tissue specificity"/>
</dbReference>
<dbReference type="MIM" id="610521">
    <property type="type" value="gene"/>
</dbReference>
<dbReference type="neXtProt" id="NX_Q96CX2"/>
<dbReference type="OpenTargets" id="ENSG00000178695"/>
<dbReference type="PharmGKB" id="PA25512"/>
<dbReference type="VEuPathDB" id="HostDB:ENSG00000178695"/>
<dbReference type="eggNOG" id="KOG2723">
    <property type="taxonomic scope" value="Eukaryota"/>
</dbReference>
<dbReference type="GeneTree" id="ENSGT00940000161074"/>
<dbReference type="HOGENOM" id="CLU_057051_0_1_1"/>
<dbReference type="InParanoid" id="Q96CX2"/>
<dbReference type="OMA" id="DPDHGMS"/>
<dbReference type="OrthoDB" id="2414723at2759"/>
<dbReference type="PAN-GO" id="Q96CX2">
    <property type="GO annotations" value="2 GO annotations based on evolutionary models"/>
</dbReference>
<dbReference type="PhylomeDB" id="Q96CX2"/>
<dbReference type="TreeFam" id="TF315332"/>
<dbReference type="PathwayCommons" id="Q96CX2"/>
<dbReference type="SignaLink" id="Q96CX2"/>
<dbReference type="SIGNOR" id="Q96CX2"/>
<dbReference type="BioGRID-ORCS" id="115207">
    <property type="hits" value="11 hits in 1149 CRISPR screens"/>
</dbReference>
<dbReference type="CD-CODE" id="DEE660B4">
    <property type="entry name" value="Stress granule"/>
</dbReference>
<dbReference type="CD-CODE" id="FB4E32DD">
    <property type="entry name" value="Presynaptic clusters and postsynaptic densities"/>
</dbReference>
<dbReference type="ChiTaRS" id="KCTD12">
    <property type="organism name" value="human"/>
</dbReference>
<dbReference type="GeneWiki" id="KCTD12"/>
<dbReference type="GenomeRNAi" id="115207"/>
<dbReference type="Pharos" id="Q96CX2">
    <property type="development level" value="Tchem"/>
</dbReference>
<dbReference type="PRO" id="PR:Q96CX2"/>
<dbReference type="Proteomes" id="UP000005640">
    <property type="component" value="Chromosome 13"/>
</dbReference>
<dbReference type="RNAct" id="Q96CX2">
    <property type="molecule type" value="protein"/>
</dbReference>
<dbReference type="Bgee" id="ENSG00000178695">
    <property type="expression patterns" value="Expressed in trigeminal ganglion and 215 other cell types or tissues"/>
</dbReference>
<dbReference type="ExpressionAtlas" id="Q96CX2">
    <property type="expression patterns" value="baseline and differential"/>
</dbReference>
<dbReference type="GO" id="GO:0042995">
    <property type="term" value="C:cell projection"/>
    <property type="evidence" value="ECO:0007669"/>
    <property type="project" value="UniProtKB-KW"/>
</dbReference>
<dbReference type="GO" id="GO:0045211">
    <property type="term" value="C:postsynaptic membrane"/>
    <property type="evidence" value="ECO:0000318"/>
    <property type="project" value="GO_Central"/>
</dbReference>
<dbReference type="GO" id="GO:0042734">
    <property type="term" value="C:presynaptic membrane"/>
    <property type="evidence" value="ECO:0000318"/>
    <property type="project" value="GO_Central"/>
</dbReference>
<dbReference type="GO" id="GO:0043235">
    <property type="term" value="C:receptor complex"/>
    <property type="evidence" value="ECO:0000318"/>
    <property type="project" value="GO_Central"/>
</dbReference>
<dbReference type="GO" id="GO:0042802">
    <property type="term" value="F:identical protein binding"/>
    <property type="evidence" value="ECO:0000353"/>
    <property type="project" value="IntAct"/>
</dbReference>
<dbReference type="GO" id="GO:0003723">
    <property type="term" value="F:RNA binding"/>
    <property type="evidence" value="ECO:0007005"/>
    <property type="project" value="UniProtKB"/>
</dbReference>
<dbReference type="GO" id="GO:0051260">
    <property type="term" value="P:protein homooligomerization"/>
    <property type="evidence" value="ECO:0007669"/>
    <property type="project" value="InterPro"/>
</dbReference>
<dbReference type="GO" id="GO:0008277">
    <property type="term" value="P:regulation of G protein-coupled receptor signaling pathway"/>
    <property type="evidence" value="ECO:0000318"/>
    <property type="project" value="GO_Central"/>
</dbReference>
<dbReference type="CDD" id="cd22217">
    <property type="entry name" value="H1_KCTD12"/>
    <property type="match status" value="1"/>
</dbReference>
<dbReference type="FunFam" id="3.30.710.10:FF:000031">
    <property type="entry name" value="BTB/POZ domain-containing protein KCTD16"/>
    <property type="match status" value="1"/>
</dbReference>
<dbReference type="Gene3D" id="3.30.710.10">
    <property type="entry name" value="Potassium Channel Kv1.1, Chain A"/>
    <property type="match status" value="1"/>
</dbReference>
<dbReference type="InterPro" id="IPR000210">
    <property type="entry name" value="BTB/POZ_dom"/>
</dbReference>
<dbReference type="InterPro" id="IPR049905">
    <property type="entry name" value="H1_KCTD12"/>
</dbReference>
<dbReference type="InterPro" id="IPR011333">
    <property type="entry name" value="SKP1/BTB/POZ_sf"/>
</dbReference>
<dbReference type="InterPro" id="IPR003131">
    <property type="entry name" value="T1-type_BTB"/>
</dbReference>
<dbReference type="PANTHER" id="PTHR14499:SF29">
    <property type="entry name" value="BTB_POZ DOMAIN-CONTAINING PROTEIN KCTD12"/>
    <property type="match status" value="1"/>
</dbReference>
<dbReference type="PANTHER" id="PTHR14499">
    <property type="entry name" value="POTASSIUM CHANNEL TETRAMERIZATION DOMAIN-CONTAINING"/>
    <property type="match status" value="1"/>
</dbReference>
<dbReference type="Pfam" id="PF02214">
    <property type="entry name" value="BTB_2"/>
    <property type="match status" value="1"/>
</dbReference>
<dbReference type="Pfam" id="PF23110">
    <property type="entry name" value="H1_KCTD8_12_16"/>
    <property type="match status" value="1"/>
</dbReference>
<dbReference type="SMART" id="SM00225">
    <property type="entry name" value="BTB"/>
    <property type="match status" value="1"/>
</dbReference>
<dbReference type="SUPFAM" id="SSF54695">
    <property type="entry name" value="POZ domain"/>
    <property type="match status" value="1"/>
</dbReference>
<feature type="initiator methionine" description="Removed" evidence="7">
    <location>
        <position position="1"/>
    </location>
</feature>
<feature type="chain" id="PRO_0000191295" description="BTB/POZ domain-containing protein KCTD12">
    <location>
        <begin position="2"/>
        <end position="325"/>
    </location>
</feature>
<feature type="region of interest" description="Disordered" evidence="3">
    <location>
        <begin position="1"/>
        <end position="28"/>
    </location>
</feature>
<feature type="region of interest" description="Disordered" evidence="3">
    <location>
        <begin position="129"/>
        <end position="202"/>
    </location>
</feature>
<feature type="compositionally biased region" description="Gly residues" evidence="3">
    <location>
        <begin position="11"/>
        <end position="21"/>
    </location>
</feature>
<feature type="modified residue" description="N-acetylalanine" evidence="7">
    <location>
        <position position="2"/>
    </location>
</feature>
<feature type="modified residue" description="Phosphotyrosine" evidence="2">
    <location>
        <position position="119"/>
    </location>
</feature>
<feature type="modified residue" description="Phosphoserine" evidence="8">
    <location>
        <position position="151"/>
    </location>
</feature>
<feature type="modified residue" description="Phosphoserine" evidence="2">
    <location>
        <position position="171"/>
    </location>
</feature>
<feature type="modified residue" description="Phosphoserine" evidence="6">
    <location>
        <position position="185"/>
    </location>
</feature>
<feature type="modified residue" description="Phosphothreonine" evidence="2">
    <location>
        <position position="196"/>
    </location>
</feature>
<feature type="modified residue" description="Phosphoserine" evidence="2">
    <location>
        <position position="200"/>
    </location>
</feature>
<feature type="strand" evidence="9">
    <location>
        <begin position="208"/>
        <end position="219"/>
    </location>
</feature>
<feature type="strand" evidence="9">
    <location>
        <begin position="236"/>
        <end position="241"/>
    </location>
</feature>
<feature type="helix" evidence="9">
    <location>
        <begin position="242"/>
        <end position="249"/>
    </location>
</feature>
<feature type="helix" evidence="9">
    <location>
        <begin position="250"/>
        <end position="252"/>
    </location>
</feature>
<feature type="strand" evidence="9">
    <location>
        <begin position="265"/>
        <end position="273"/>
    </location>
</feature>
<feature type="helix" evidence="9">
    <location>
        <begin position="277"/>
        <end position="286"/>
    </location>
</feature>
<feature type="strand" evidence="9">
    <location>
        <begin position="290"/>
        <end position="301"/>
    </location>
</feature>
<feature type="strand" evidence="9">
    <location>
        <begin position="313"/>
        <end position="324"/>
    </location>
</feature>
<name>KCD12_HUMAN</name>
<accession>Q96CX2</accession>
<proteinExistence type="evidence at protein level"/>